<protein>
    <recommendedName>
        <fullName evidence="1">3-dehydroquinate dehydratase</fullName>
        <shortName evidence="1">3-dehydroquinase</shortName>
        <ecNumber evidence="1">4.2.1.10</ecNumber>
    </recommendedName>
    <alternativeName>
        <fullName evidence="1">Type I DHQase</fullName>
    </alternativeName>
    <alternativeName>
        <fullName evidence="1">Type I dehydroquinase</fullName>
        <shortName evidence="1">DHQ1</shortName>
    </alternativeName>
</protein>
<name>AROD_DEHM1</name>
<evidence type="ECO:0000255" key="1">
    <source>
        <dbReference type="HAMAP-Rule" id="MF_00214"/>
    </source>
</evidence>
<proteinExistence type="inferred from homology"/>
<feature type="chain" id="PRO_0000325522" description="3-dehydroquinate dehydratase">
    <location>
        <begin position="1"/>
        <end position="222"/>
    </location>
</feature>
<feature type="active site" description="Proton donor/acceptor" evidence="1">
    <location>
        <position position="112"/>
    </location>
</feature>
<feature type="active site" description="Schiff-base intermediate with substrate" evidence="1">
    <location>
        <position position="139"/>
    </location>
</feature>
<feature type="binding site" evidence="1">
    <location>
        <begin position="29"/>
        <end position="31"/>
    </location>
    <ligand>
        <name>3-dehydroquinate</name>
        <dbReference type="ChEBI" id="CHEBI:32364"/>
    </ligand>
</feature>
<feature type="binding site" evidence="1">
    <location>
        <position position="55"/>
    </location>
    <ligand>
        <name>3-dehydroquinate</name>
        <dbReference type="ChEBI" id="CHEBI:32364"/>
    </ligand>
</feature>
<feature type="binding site" evidence="1">
    <location>
        <position position="178"/>
    </location>
    <ligand>
        <name>3-dehydroquinate</name>
        <dbReference type="ChEBI" id="CHEBI:32364"/>
    </ligand>
</feature>
<feature type="binding site" evidence="1">
    <location>
        <position position="199"/>
    </location>
    <ligand>
        <name>3-dehydroquinate</name>
        <dbReference type="ChEBI" id="CHEBI:32364"/>
    </ligand>
</feature>
<feature type="binding site" evidence="1">
    <location>
        <position position="203"/>
    </location>
    <ligand>
        <name>3-dehydroquinate</name>
        <dbReference type="ChEBI" id="CHEBI:32364"/>
    </ligand>
</feature>
<accession>Q3Z989</accession>
<sequence length="222" mass="24366">MKNPPVCCVITRLPEAESLKKSEGAAFYELRLDLLGESWREAAAMLDKPFMATCRRSAEGGSFSGSEEERIGLLEKAAAAGAFMLDIEYSTPHLGEVLKRLRTQSKCLVSHHNFADTPSAGDLKTLVKDMLNYPADIYKVITTATSINDNIKLLNLIKEIPDKKIVAFAMGNLGILSRILCPLAGSPFTYASLNDSNQSASGQMTLAQMIEIYRSVNYENHT</sequence>
<organism>
    <name type="scientific">Dehalococcoides mccartyi (strain ATCC BAA-2266 / KCTC 15142 / 195)</name>
    <name type="common">Dehalococcoides ethenogenes (strain 195)</name>
    <dbReference type="NCBI Taxonomy" id="243164"/>
    <lineage>
        <taxon>Bacteria</taxon>
        <taxon>Bacillati</taxon>
        <taxon>Chloroflexota</taxon>
        <taxon>Dehalococcoidia</taxon>
        <taxon>Dehalococcoidales</taxon>
        <taxon>Dehalococcoidaceae</taxon>
        <taxon>Dehalococcoides</taxon>
    </lineage>
</organism>
<dbReference type="EC" id="4.2.1.10" evidence="1"/>
<dbReference type="EMBL" id="CP000027">
    <property type="protein sequence ID" value="AAW40205.1"/>
    <property type="molecule type" value="Genomic_DNA"/>
</dbReference>
<dbReference type="RefSeq" id="WP_010936243.1">
    <property type="nucleotide sequence ID" value="NC_002936.3"/>
</dbReference>
<dbReference type="SMR" id="Q3Z989"/>
<dbReference type="FunCoup" id="Q3Z989">
    <property type="interactions" value="72"/>
</dbReference>
<dbReference type="STRING" id="243164.DET0466"/>
<dbReference type="GeneID" id="3230169"/>
<dbReference type="KEGG" id="det:DET0466"/>
<dbReference type="PATRIC" id="fig|243164.10.peg.444"/>
<dbReference type="eggNOG" id="COG0710">
    <property type="taxonomic scope" value="Bacteria"/>
</dbReference>
<dbReference type="HOGENOM" id="CLU_064444_2_1_0"/>
<dbReference type="InParanoid" id="Q3Z989"/>
<dbReference type="UniPathway" id="UPA00053">
    <property type="reaction ID" value="UER00086"/>
</dbReference>
<dbReference type="Proteomes" id="UP000008289">
    <property type="component" value="Chromosome"/>
</dbReference>
<dbReference type="GO" id="GO:0003855">
    <property type="term" value="F:3-dehydroquinate dehydratase activity"/>
    <property type="evidence" value="ECO:0007669"/>
    <property type="project" value="UniProtKB-UniRule"/>
</dbReference>
<dbReference type="GO" id="GO:0046279">
    <property type="term" value="P:3,4-dihydroxybenzoate biosynthetic process"/>
    <property type="evidence" value="ECO:0007669"/>
    <property type="project" value="UniProtKB-ARBA"/>
</dbReference>
<dbReference type="GO" id="GO:0008652">
    <property type="term" value="P:amino acid biosynthetic process"/>
    <property type="evidence" value="ECO:0007669"/>
    <property type="project" value="UniProtKB-KW"/>
</dbReference>
<dbReference type="GO" id="GO:0009073">
    <property type="term" value="P:aromatic amino acid family biosynthetic process"/>
    <property type="evidence" value="ECO:0007669"/>
    <property type="project" value="UniProtKB-KW"/>
</dbReference>
<dbReference type="GO" id="GO:0009423">
    <property type="term" value="P:chorismate biosynthetic process"/>
    <property type="evidence" value="ECO:0007669"/>
    <property type="project" value="UniProtKB-UniRule"/>
</dbReference>
<dbReference type="CDD" id="cd00502">
    <property type="entry name" value="DHQase_I"/>
    <property type="match status" value="1"/>
</dbReference>
<dbReference type="Gene3D" id="3.20.20.70">
    <property type="entry name" value="Aldolase class I"/>
    <property type="match status" value="1"/>
</dbReference>
<dbReference type="HAMAP" id="MF_00214">
    <property type="entry name" value="AroD"/>
    <property type="match status" value="1"/>
</dbReference>
<dbReference type="InterPro" id="IPR013785">
    <property type="entry name" value="Aldolase_TIM"/>
</dbReference>
<dbReference type="InterPro" id="IPR001381">
    <property type="entry name" value="DHquinase_I"/>
</dbReference>
<dbReference type="InterPro" id="IPR050146">
    <property type="entry name" value="Type-I_3-dehydroquinase"/>
</dbReference>
<dbReference type="NCBIfam" id="TIGR01093">
    <property type="entry name" value="aroD"/>
    <property type="match status" value="1"/>
</dbReference>
<dbReference type="PANTHER" id="PTHR43699">
    <property type="entry name" value="3-DEHYDROQUINATE DEHYDRATASE"/>
    <property type="match status" value="1"/>
</dbReference>
<dbReference type="PANTHER" id="PTHR43699:SF1">
    <property type="entry name" value="3-DEHYDROQUINATE DEHYDRATASE"/>
    <property type="match status" value="1"/>
</dbReference>
<dbReference type="Pfam" id="PF01487">
    <property type="entry name" value="DHquinase_I"/>
    <property type="match status" value="1"/>
</dbReference>
<dbReference type="SUPFAM" id="SSF51569">
    <property type="entry name" value="Aldolase"/>
    <property type="match status" value="1"/>
</dbReference>
<gene>
    <name evidence="1" type="primary">aroD</name>
    <name type="ordered locus">DET0466</name>
</gene>
<keyword id="KW-0028">Amino-acid biosynthesis</keyword>
<keyword id="KW-0057">Aromatic amino acid biosynthesis</keyword>
<keyword id="KW-0456">Lyase</keyword>
<keyword id="KW-0704">Schiff base</keyword>
<reference key="1">
    <citation type="journal article" date="2005" name="Science">
        <title>Genome sequence of the PCE-dechlorinating bacterium Dehalococcoides ethenogenes.</title>
        <authorList>
            <person name="Seshadri R."/>
            <person name="Adrian L."/>
            <person name="Fouts D.E."/>
            <person name="Eisen J.A."/>
            <person name="Phillippy A.M."/>
            <person name="Methe B.A."/>
            <person name="Ward N.L."/>
            <person name="Nelson W.C."/>
            <person name="DeBoy R.T."/>
            <person name="Khouri H.M."/>
            <person name="Kolonay J.F."/>
            <person name="Dodson R.J."/>
            <person name="Daugherty S.C."/>
            <person name="Brinkac L.M."/>
            <person name="Sullivan S.A."/>
            <person name="Madupu R."/>
            <person name="Nelson K.E."/>
            <person name="Kang K.H."/>
            <person name="Impraim M."/>
            <person name="Tran K."/>
            <person name="Robinson J.M."/>
            <person name="Forberger H.A."/>
            <person name="Fraser C.M."/>
            <person name="Zinder S.H."/>
            <person name="Heidelberg J.F."/>
        </authorList>
    </citation>
    <scope>NUCLEOTIDE SEQUENCE [LARGE SCALE GENOMIC DNA]</scope>
    <source>
        <strain>ATCC BAA-2266 / KCTC 15142 / 195</strain>
    </source>
</reference>
<comment type="function">
    <text evidence="1">Involved in the third step of the chorismate pathway, which leads to the biosynthesis of aromatic amino acids. Catalyzes the cis-dehydration of 3-dehydroquinate (DHQ) and introduces the first double bond of the aromatic ring to yield 3-dehydroshikimate.</text>
</comment>
<comment type="catalytic activity">
    <reaction evidence="1">
        <text>3-dehydroquinate = 3-dehydroshikimate + H2O</text>
        <dbReference type="Rhea" id="RHEA:21096"/>
        <dbReference type="ChEBI" id="CHEBI:15377"/>
        <dbReference type="ChEBI" id="CHEBI:16630"/>
        <dbReference type="ChEBI" id="CHEBI:32364"/>
        <dbReference type="EC" id="4.2.1.10"/>
    </reaction>
</comment>
<comment type="pathway">
    <text evidence="1">Metabolic intermediate biosynthesis; chorismate biosynthesis; chorismate from D-erythrose 4-phosphate and phosphoenolpyruvate: step 3/7.</text>
</comment>
<comment type="subunit">
    <text evidence="1">Homodimer.</text>
</comment>
<comment type="similarity">
    <text evidence="1">Belongs to the type-I 3-dehydroquinase family.</text>
</comment>